<organism>
    <name type="scientific">Citrobacter koseri (strain ATCC BAA-895 / CDC 4225-83 / SGSC4696)</name>
    <dbReference type="NCBI Taxonomy" id="290338"/>
    <lineage>
        <taxon>Bacteria</taxon>
        <taxon>Pseudomonadati</taxon>
        <taxon>Pseudomonadota</taxon>
        <taxon>Gammaproteobacteria</taxon>
        <taxon>Enterobacterales</taxon>
        <taxon>Enterobacteriaceae</taxon>
        <taxon>Citrobacter</taxon>
    </lineage>
</organism>
<feature type="chain" id="PRO_1000051035" description="Small ribosomal subunit protein uS19">
    <location>
        <begin position="1"/>
        <end position="92"/>
    </location>
</feature>
<reference key="1">
    <citation type="submission" date="2007-08" db="EMBL/GenBank/DDBJ databases">
        <authorList>
            <consortium name="The Citrobacter koseri Genome Sequencing Project"/>
            <person name="McClelland M."/>
            <person name="Sanderson E.K."/>
            <person name="Porwollik S."/>
            <person name="Spieth J."/>
            <person name="Clifton W.S."/>
            <person name="Latreille P."/>
            <person name="Courtney L."/>
            <person name="Wang C."/>
            <person name="Pepin K."/>
            <person name="Bhonagiri V."/>
            <person name="Nash W."/>
            <person name="Johnson M."/>
            <person name="Thiruvilangam P."/>
            <person name="Wilson R."/>
        </authorList>
    </citation>
    <scope>NUCLEOTIDE SEQUENCE [LARGE SCALE GENOMIC DNA]</scope>
    <source>
        <strain>ATCC BAA-895 / CDC 4225-83 / SGSC4696</strain>
    </source>
</reference>
<protein>
    <recommendedName>
        <fullName evidence="1">Small ribosomal subunit protein uS19</fullName>
    </recommendedName>
    <alternativeName>
        <fullName evidence="2">30S ribosomal protein S19</fullName>
    </alternativeName>
</protein>
<sequence length="92" mass="10430">MPRSLKKGPFIDLHLLKKVEKAVESGDKKPLRTWSRRSTIFPNMIGLTIAVHNGRQHVPVFVTDEMVGHKLGEFAPTRTYRGHAADKKAKKK</sequence>
<keyword id="KW-1185">Reference proteome</keyword>
<keyword id="KW-0687">Ribonucleoprotein</keyword>
<keyword id="KW-0689">Ribosomal protein</keyword>
<keyword id="KW-0694">RNA-binding</keyword>
<keyword id="KW-0699">rRNA-binding</keyword>
<comment type="function">
    <text evidence="1">Protein S19 forms a complex with S13 that binds strongly to the 16S ribosomal RNA.</text>
</comment>
<comment type="similarity">
    <text evidence="1">Belongs to the universal ribosomal protein uS19 family.</text>
</comment>
<evidence type="ECO:0000255" key="1">
    <source>
        <dbReference type="HAMAP-Rule" id="MF_00531"/>
    </source>
</evidence>
<evidence type="ECO:0000305" key="2"/>
<name>RS19_CITK8</name>
<gene>
    <name evidence="1" type="primary">rpsS</name>
    <name type="ordered locus">CKO_04732</name>
</gene>
<dbReference type="EMBL" id="CP000822">
    <property type="protein sequence ID" value="ABV15777.1"/>
    <property type="molecule type" value="Genomic_DNA"/>
</dbReference>
<dbReference type="RefSeq" id="WP_001138117.1">
    <property type="nucleotide sequence ID" value="NC_009792.1"/>
</dbReference>
<dbReference type="SMR" id="A8AQL3"/>
<dbReference type="STRING" id="290338.CKO_04732"/>
<dbReference type="GeneID" id="98390438"/>
<dbReference type="KEGG" id="cko:CKO_04732"/>
<dbReference type="HOGENOM" id="CLU_144911_0_1_6"/>
<dbReference type="OrthoDB" id="9797833at2"/>
<dbReference type="Proteomes" id="UP000008148">
    <property type="component" value="Chromosome"/>
</dbReference>
<dbReference type="GO" id="GO:0005737">
    <property type="term" value="C:cytoplasm"/>
    <property type="evidence" value="ECO:0007669"/>
    <property type="project" value="UniProtKB-ARBA"/>
</dbReference>
<dbReference type="GO" id="GO:0015935">
    <property type="term" value="C:small ribosomal subunit"/>
    <property type="evidence" value="ECO:0007669"/>
    <property type="project" value="InterPro"/>
</dbReference>
<dbReference type="GO" id="GO:0019843">
    <property type="term" value="F:rRNA binding"/>
    <property type="evidence" value="ECO:0007669"/>
    <property type="project" value="UniProtKB-UniRule"/>
</dbReference>
<dbReference type="GO" id="GO:0003735">
    <property type="term" value="F:structural constituent of ribosome"/>
    <property type="evidence" value="ECO:0007669"/>
    <property type="project" value="InterPro"/>
</dbReference>
<dbReference type="GO" id="GO:0000028">
    <property type="term" value="P:ribosomal small subunit assembly"/>
    <property type="evidence" value="ECO:0007669"/>
    <property type="project" value="TreeGrafter"/>
</dbReference>
<dbReference type="GO" id="GO:0006412">
    <property type="term" value="P:translation"/>
    <property type="evidence" value="ECO:0007669"/>
    <property type="project" value="UniProtKB-UniRule"/>
</dbReference>
<dbReference type="FunFam" id="3.30.860.10:FF:000001">
    <property type="entry name" value="30S ribosomal protein S19"/>
    <property type="match status" value="1"/>
</dbReference>
<dbReference type="Gene3D" id="3.30.860.10">
    <property type="entry name" value="30s Ribosomal Protein S19, Chain A"/>
    <property type="match status" value="1"/>
</dbReference>
<dbReference type="HAMAP" id="MF_00531">
    <property type="entry name" value="Ribosomal_uS19"/>
    <property type="match status" value="1"/>
</dbReference>
<dbReference type="InterPro" id="IPR002222">
    <property type="entry name" value="Ribosomal_uS19"/>
</dbReference>
<dbReference type="InterPro" id="IPR005732">
    <property type="entry name" value="Ribosomal_uS19_bac-type"/>
</dbReference>
<dbReference type="InterPro" id="IPR020934">
    <property type="entry name" value="Ribosomal_uS19_CS"/>
</dbReference>
<dbReference type="InterPro" id="IPR023575">
    <property type="entry name" value="Ribosomal_uS19_SF"/>
</dbReference>
<dbReference type="NCBIfam" id="TIGR01050">
    <property type="entry name" value="rpsS_bact"/>
    <property type="match status" value="1"/>
</dbReference>
<dbReference type="PANTHER" id="PTHR11880">
    <property type="entry name" value="RIBOSOMAL PROTEIN S19P FAMILY MEMBER"/>
    <property type="match status" value="1"/>
</dbReference>
<dbReference type="PANTHER" id="PTHR11880:SF8">
    <property type="entry name" value="SMALL RIBOSOMAL SUBUNIT PROTEIN US19M"/>
    <property type="match status" value="1"/>
</dbReference>
<dbReference type="Pfam" id="PF00203">
    <property type="entry name" value="Ribosomal_S19"/>
    <property type="match status" value="1"/>
</dbReference>
<dbReference type="PIRSF" id="PIRSF002144">
    <property type="entry name" value="Ribosomal_S19"/>
    <property type="match status" value="1"/>
</dbReference>
<dbReference type="PRINTS" id="PR00975">
    <property type="entry name" value="RIBOSOMALS19"/>
</dbReference>
<dbReference type="SUPFAM" id="SSF54570">
    <property type="entry name" value="Ribosomal protein S19"/>
    <property type="match status" value="1"/>
</dbReference>
<dbReference type="PROSITE" id="PS00323">
    <property type="entry name" value="RIBOSOMAL_S19"/>
    <property type="match status" value="1"/>
</dbReference>
<accession>A8AQL3</accession>
<proteinExistence type="inferred from homology"/>